<evidence type="ECO:0000255" key="1">
    <source>
        <dbReference type="PROSITE-ProRule" id="PRU00411"/>
    </source>
</evidence>
<evidence type="ECO:0000256" key="2">
    <source>
        <dbReference type="SAM" id="MobiDB-lite"/>
    </source>
</evidence>
<evidence type="ECO:0000269" key="3">
    <source>
    </source>
</evidence>
<evidence type="ECO:0000269" key="4">
    <source ref="5"/>
</evidence>
<evidence type="ECO:0000303" key="5">
    <source>
    </source>
</evidence>
<evidence type="ECO:0000305" key="6"/>
<evidence type="ECO:0000305" key="7">
    <source>
    </source>
</evidence>
<evidence type="ECO:0000312" key="8">
    <source>
        <dbReference type="EMBL" id="BAJ16474.2"/>
    </source>
</evidence>
<sequence length="243" mass="25929">MHGAAVTPPSTVSPTPVPTQSAPLSVALVSHRCPDPCEVTGFHSRRVHEPCEIRPSDDVVLFYGPRMGQELRRFSTEANGGLPPFAVLATCLDWDDVCLALDSGAIGYLLEIEDPDLLAAALHCISHGHTILAPQIAEHARVTSCPGGALRQTAAVARPDTSGSATGRTGDSSPSLALSPQEREIMTRLASGLSVREIAVEMRLAEKTVRNYLSHIYGKLGVRSRSQALLRWLGHPGGETAHH</sequence>
<dbReference type="EMBL" id="AB469193">
    <property type="protein sequence ID" value="BAJ16474.2"/>
    <property type="molecule type" value="Genomic_DNA"/>
</dbReference>
<dbReference type="GO" id="GO:0003677">
    <property type="term" value="F:DNA binding"/>
    <property type="evidence" value="ECO:0007669"/>
    <property type="project" value="UniProtKB-KW"/>
</dbReference>
<dbReference type="GO" id="GO:0017000">
    <property type="term" value="P:antibiotic biosynthetic process"/>
    <property type="evidence" value="ECO:0007669"/>
    <property type="project" value="UniProtKB-KW"/>
</dbReference>
<dbReference type="GO" id="GO:0006355">
    <property type="term" value="P:regulation of DNA-templated transcription"/>
    <property type="evidence" value="ECO:0007669"/>
    <property type="project" value="InterPro"/>
</dbReference>
<dbReference type="CDD" id="cd06170">
    <property type="entry name" value="LuxR_C_like"/>
    <property type="match status" value="1"/>
</dbReference>
<dbReference type="Gene3D" id="3.40.50.2300">
    <property type="match status" value="1"/>
</dbReference>
<dbReference type="InterPro" id="IPR016032">
    <property type="entry name" value="Sig_transdc_resp-reg_C-effctor"/>
</dbReference>
<dbReference type="InterPro" id="IPR000792">
    <property type="entry name" value="Tscrpt_reg_LuxR_C"/>
</dbReference>
<dbReference type="PANTHER" id="PTHR44688">
    <property type="entry name" value="DNA-BINDING TRANSCRIPTIONAL ACTIVATOR DEVR_DOSR"/>
    <property type="match status" value="1"/>
</dbReference>
<dbReference type="PANTHER" id="PTHR44688:SF16">
    <property type="entry name" value="DNA-BINDING TRANSCRIPTIONAL ACTIVATOR DEVR_DOSR"/>
    <property type="match status" value="1"/>
</dbReference>
<dbReference type="Pfam" id="PF00196">
    <property type="entry name" value="GerE"/>
    <property type="match status" value="1"/>
</dbReference>
<dbReference type="PRINTS" id="PR00038">
    <property type="entry name" value="HTHLUXR"/>
</dbReference>
<dbReference type="SMART" id="SM00421">
    <property type="entry name" value="HTH_LUXR"/>
    <property type="match status" value="1"/>
</dbReference>
<dbReference type="SUPFAM" id="SSF46894">
    <property type="entry name" value="C-terminal effector domain of the bipartite response regulators"/>
    <property type="match status" value="1"/>
</dbReference>
<dbReference type="PROSITE" id="PS00622">
    <property type="entry name" value="HTH_LUXR_1"/>
    <property type="match status" value="1"/>
</dbReference>
<dbReference type="PROSITE" id="PS50043">
    <property type="entry name" value="HTH_LUXR_2"/>
    <property type="match status" value="1"/>
</dbReference>
<protein>
    <recommendedName>
        <fullName evidence="6">Probable HTH-type transcriptional regulator GfsR</fullName>
    </recommendedName>
</protein>
<keyword id="KW-0045">Antibiotic biosynthesis</keyword>
<keyword id="KW-0238">DNA-binding</keyword>
<keyword id="KW-0804">Transcription</keyword>
<keyword id="KW-0805">Transcription regulation</keyword>
<gene>
    <name evidence="5" type="primary">gfsR</name>
</gene>
<reference evidence="8" key="1">
    <citation type="journal article" date="2010" name="ChemBioChem">
        <title>Cloning and characterization of the biosynthetic gene cluster of 16-membered macrolide antibiotic FD-891: involvement of a dual functional cytochrome P450 monooxygenase catalyzing epoxidation and hydroxylation.</title>
        <authorList>
            <person name="Kudo F."/>
            <person name="Motegi A."/>
            <person name="Mizoue K."/>
            <person name="Eguchi T."/>
        </authorList>
    </citation>
    <scope>NUCLEOTIDE SEQUENCE [GENOMIC DNA]</scope>
    <scope>FUNCTION</scope>
    <source>
        <strain>A-8890</strain>
    </source>
</reference>
<reference key="2">
    <citation type="journal article" date="2010" name="ChemBioChem">
        <authorList>
            <person name="Kudo F."/>
            <person name="Motegi A."/>
            <person name="Mizoue K."/>
            <person name="Eguchi T."/>
        </authorList>
    </citation>
    <scope>ERRATUM OF PUBMED:20589823</scope>
</reference>
<reference key="3">
    <citation type="submission" date="2017-12" db="EMBL/GenBank/DDBJ databases">
        <authorList>
            <person name="Kudo F."/>
            <person name="Eguchi T."/>
        </authorList>
    </citation>
    <scope>SEQUENCE REVISION TO 128</scope>
</reference>
<reference key="4">
    <citation type="journal article" date="1994" name="J. Antibiot.">
        <title>Isolation and characterization of new 18-membered macrolides FD-891 and FD-892.</title>
        <authorList>
            <person name="Seki-Asano M."/>
            <person name="Okazaki T."/>
            <person name="Yamagishi M."/>
            <person name="Sakai N."/>
            <person name="Hanada K."/>
            <person name="Mizoue K."/>
        </authorList>
    </citation>
    <scope>ANTIBIOTIC ISOLATION AND ACTIVITY CHARACTERIZATION AGAINST HUMAN CELL LINES</scope>
    <source>
        <strain>A-8890</strain>
    </source>
</reference>
<reference key="5">
    <citation type="journal article" date="2005" name="J. Gen. Plant Pathol.">
        <title>Phytotoxin produced by Streptomyces sp. causing potato russet scab in Japan.</title>
        <authorList>
            <person name="Natsume M."/>
            <person name="Komiya M."/>
            <person name="Koyanagi F."/>
            <person name="Tashiro N."/>
            <person name="Kawaide H."/>
            <person name="Abe H."/>
        </authorList>
    </citation>
    <scope>ANTIBIOTIC ISOLATION AND ACTIVITY CHARACTERIZATION AGAINST PLANTS</scope>
</reference>
<accession>E0D209</accession>
<name>GFSR_STRHA</name>
<proteinExistence type="evidence at protein level"/>
<comment type="function">
    <text evidence="7">Probable DNA-binding protein that contributes to the control of expression of the biosynthesis operon of the 16-membered macrolide antibiotics FD-891 and FD-892 (Probable). Might be a member of a two-component regulatory system; the putative sensor kinase gene is unknown (Probable).</text>
</comment>
<comment type="pathway">
    <text evidence="7">Antibiotic biosynthesis.</text>
</comment>
<comment type="miscellaneous">
    <text evidence="3 4">The macrolide antibiotics FD-891 and FD-892 induce morphological changes of human promyelocytic leukemia (HL-60) cells and have cytocidal activity against tumor cell lines in vitro (PubMed:8002384). FD-891 produced by Streptomyces sp. MAFF 225003 and MAFF 225006 inhibits growth of rice and alfalfa seedlings and may cause russet scab in potatoes (Ref.5).</text>
</comment>
<organism>
    <name type="scientific">Streptomyces halstedii</name>
    <dbReference type="NCBI Taxonomy" id="1944"/>
    <lineage>
        <taxon>Bacteria</taxon>
        <taxon>Bacillati</taxon>
        <taxon>Actinomycetota</taxon>
        <taxon>Actinomycetes</taxon>
        <taxon>Kitasatosporales</taxon>
        <taxon>Streptomycetaceae</taxon>
        <taxon>Streptomyces</taxon>
    </lineage>
</organism>
<feature type="chain" id="PRO_0000461670" description="Probable HTH-type transcriptional regulator GfsR">
    <location>
        <begin position="1"/>
        <end position="243"/>
    </location>
</feature>
<feature type="domain" description="HTH luxR-type" evidence="1">
    <location>
        <begin position="171"/>
        <end position="236"/>
    </location>
</feature>
<feature type="DNA-binding region" description="H-T-H motif" evidence="1">
    <location>
        <begin position="195"/>
        <end position="214"/>
    </location>
</feature>
<feature type="region of interest" description="Disordered" evidence="2">
    <location>
        <begin position="154"/>
        <end position="179"/>
    </location>
</feature>
<feature type="compositionally biased region" description="Polar residues" evidence="2">
    <location>
        <begin position="161"/>
        <end position="178"/>
    </location>
</feature>